<reference key="1">
    <citation type="submission" date="1994-06" db="EMBL/GenBank/DDBJ databases">
        <authorList>
            <person name="Furunobu A."/>
        </authorList>
    </citation>
    <scope>NUCLEOTIDE SEQUENCE [MRNA]</scope>
</reference>
<reference key="2">
    <citation type="journal article" date="2004" name="Genome Res.">
        <title>The status, quality, and expansion of the NIH full-length cDNA project: the Mammalian Gene Collection (MGC).</title>
        <authorList>
            <consortium name="The MGC Project Team"/>
        </authorList>
    </citation>
    <scope>NUCLEOTIDE SEQUENCE [LARGE SCALE MRNA]</scope>
    <source>
        <tissue>Ovary</tissue>
    </source>
</reference>
<reference key="3">
    <citation type="journal article" date="2012" name="Nat. Commun.">
        <title>Quantitative maps of protein phosphorylation sites across 14 different rat organs and tissues.</title>
        <authorList>
            <person name="Lundby A."/>
            <person name="Secher A."/>
            <person name="Lage K."/>
            <person name="Nordsborg N.B."/>
            <person name="Dmytriyev A."/>
            <person name="Lundby C."/>
            <person name="Olsen J.V."/>
        </authorList>
    </citation>
    <scope>PHOSPHORYLATION [LARGE SCALE ANALYSIS] AT SER-78 AND SER-85</scope>
    <scope>IDENTIFICATION BY MASS SPECTROMETRY [LARGE SCALE ANALYSIS]</scope>
</reference>
<name>WEE1_RAT</name>
<proteinExistence type="evidence at protein level"/>
<organism>
    <name type="scientific">Rattus norvegicus</name>
    <name type="common">Rat</name>
    <dbReference type="NCBI Taxonomy" id="10116"/>
    <lineage>
        <taxon>Eukaryota</taxon>
        <taxon>Metazoa</taxon>
        <taxon>Chordata</taxon>
        <taxon>Craniata</taxon>
        <taxon>Vertebrata</taxon>
        <taxon>Euteleostomi</taxon>
        <taxon>Mammalia</taxon>
        <taxon>Eutheria</taxon>
        <taxon>Euarchontoglires</taxon>
        <taxon>Glires</taxon>
        <taxon>Rodentia</taxon>
        <taxon>Myomorpha</taxon>
        <taxon>Muroidea</taxon>
        <taxon>Muridae</taxon>
        <taxon>Murinae</taxon>
        <taxon>Rattus</taxon>
    </lineage>
</organism>
<keyword id="KW-0067">ATP-binding</keyword>
<keyword id="KW-0131">Cell cycle</keyword>
<keyword id="KW-0132">Cell division</keyword>
<keyword id="KW-0418">Kinase</keyword>
<keyword id="KW-0460">Magnesium</keyword>
<keyword id="KW-0479">Metal-binding</keyword>
<keyword id="KW-0498">Mitosis</keyword>
<keyword id="KW-0547">Nucleotide-binding</keyword>
<keyword id="KW-0539">Nucleus</keyword>
<keyword id="KW-0597">Phosphoprotein</keyword>
<keyword id="KW-1185">Reference proteome</keyword>
<keyword id="KW-0808">Transferase</keyword>
<keyword id="KW-0829">Tyrosine-protein kinase</keyword>
<keyword id="KW-0832">Ubl conjugation</keyword>
<evidence type="ECO:0000250" key="1">
    <source>
        <dbReference type="UniProtKB" id="P30291"/>
    </source>
</evidence>
<evidence type="ECO:0000250" key="2">
    <source>
        <dbReference type="UniProtKB" id="P47810"/>
    </source>
</evidence>
<evidence type="ECO:0000255" key="3">
    <source>
        <dbReference type="PROSITE-ProRule" id="PRU00159"/>
    </source>
</evidence>
<evidence type="ECO:0000255" key="4">
    <source>
        <dbReference type="PROSITE-ProRule" id="PRU10027"/>
    </source>
</evidence>
<evidence type="ECO:0000256" key="5">
    <source>
        <dbReference type="SAM" id="MobiDB-lite"/>
    </source>
</evidence>
<evidence type="ECO:0007744" key="6">
    <source>
    </source>
</evidence>
<feature type="chain" id="PRO_0000086812" description="Wee1-like protein kinase">
    <location>
        <begin position="1"/>
        <end position="646"/>
    </location>
</feature>
<feature type="domain" description="Protein kinase" evidence="3">
    <location>
        <begin position="298"/>
        <end position="568"/>
    </location>
</feature>
<feature type="region of interest" description="Disordered" evidence="5">
    <location>
        <begin position="27"/>
        <end position="174"/>
    </location>
</feature>
<feature type="compositionally biased region" description="Acidic residues" evidence="5">
    <location>
        <begin position="32"/>
        <end position="42"/>
    </location>
</feature>
<feature type="compositionally biased region" description="Gly residues" evidence="5">
    <location>
        <begin position="96"/>
        <end position="110"/>
    </location>
</feature>
<feature type="compositionally biased region" description="Polar residues" evidence="5">
    <location>
        <begin position="120"/>
        <end position="130"/>
    </location>
</feature>
<feature type="compositionally biased region" description="Pro residues" evidence="5">
    <location>
        <begin position="165"/>
        <end position="174"/>
    </location>
</feature>
<feature type="active site" description="Proton acceptor" evidence="3 4">
    <location>
        <position position="425"/>
    </location>
</feature>
<feature type="binding site" evidence="3">
    <location>
        <begin position="304"/>
        <end position="312"/>
    </location>
    <ligand>
        <name>ATP</name>
        <dbReference type="ChEBI" id="CHEBI:30616"/>
    </ligand>
</feature>
<feature type="binding site" evidence="3">
    <location>
        <position position="327"/>
    </location>
    <ligand>
        <name>ATP</name>
        <dbReference type="ChEBI" id="CHEBI:30616"/>
    </ligand>
</feature>
<feature type="binding site" evidence="1">
    <location>
        <position position="341"/>
    </location>
    <ligand>
        <name>Mg(2+)</name>
        <dbReference type="ChEBI" id="CHEBI:18420"/>
        <label>2</label>
    </ligand>
</feature>
<feature type="binding site" evidence="1">
    <location>
        <position position="430"/>
    </location>
    <ligand>
        <name>Mg(2+)</name>
        <dbReference type="ChEBI" id="CHEBI:18420"/>
        <label>1</label>
    </ligand>
</feature>
<feature type="binding site" evidence="1">
    <location>
        <position position="462"/>
    </location>
    <ligand>
        <name>Mg(2+)</name>
        <dbReference type="ChEBI" id="CHEBI:18420"/>
        <label>1</label>
    </ligand>
</feature>
<feature type="binding site" evidence="1">
    <location>
        <position position="464"/>
    </location>
    <ligand>
        <name>Mg(2+)</name>
        <dbReference type="ChEBI" id="CHEBI:18420"/>
        <label>2</label>
    </ligand>
</feature>
<feature type="modified residue" description="Phosphoserine; by PLK1" evidence="1">
    <location>
        <position position="52"/>
    </location>
</feature>
<feature type="modified residue" description="Phosphoserine" evidence="6">
    <location>
        <position position="78"/>
    </location>
</feature>
<feature type="modified residue" description="Phosphoserine" evidence="6">
    <location>
        <position position="85"/>
    </location>
</feature>
<feature type="modified residue" description="Phosphoserine; by CDK1" evidence="1">
    <location>
        <position position="123"/>
    </location>
</feature>
<feature type="modified residue" description="Phosphoserine" evidence="1">
    <location>
        <position position="127"/>
    </location>
</feature>
<feature type="modified residue" description="Phosphoserine" evidence="1">
    <location>
        <position position="137"/>
    </location>
</feature>
<feature type="modified residue" description="Phosphoserine" evidence="1">
    <location>
        <position position="139"/>
    </location>
</feature>
<feature type="modified residue" description="Phosphoserine" evidence="1">
    <location>
        <position position="150"/>
    </location>
</feature>
<feature type="modified residue" description="Phosphoserine" evidence="2">
    <location>
        <position position="165"/>
    </location>
</feature>
<feature type="modified residue" description="Phosphothreonine" evidence="1">
    <location>
        <position position="187"/>
    </location>
</feature>
<feature type="modified residue" description="Phosphothreonine" evidence="1">
    <location>
        <position position="190"/>
    </location>
</feature>
<feature type="modified residue" description="Phosphothreonine" evidence="1">
    <location>
        <position position="239"/>
    </location>
</feature>
<feature type="modified residue" description="Phosphoserine" evidence="1">
    <location>
        <position position="269"/>
    </location>
</feature>
<feature type="modified residue" description="Phosphoserine" evidence="1">
    <location>
        <position position="306"/>
    </location>
</feature>
<feature type="modified residue" description="Phosphoserine" evidence="1">
    <location>
        <position position="311"/>
    </location>
</feature>
<feature type="modified residue" description="Phosphoserine; by BRSK1 and BRSK2" evidence="1">
    <location>
        <position position="642"/>
    </location>
</feature>
<comment type="function">
    <text evidence="1">Acts as a negative regulator of entry into mitosis (G2 to M transition) by protecting the nucleus from cytoplasmically activated cyclin B1-complexed CDK1 before the onset of mitosis by mediating phosphorylation of CDK1 on 'Tyr-15'. Specifically phosphorylates and inactivates cyclin B1-complexed CDK1 reaching a maximum during G2 phase and a minimum as cells enter M phase. Phosphorylation of cyclin B1-CDK1 occurs exclusively on 'Tyr-15' and phosphorylation of monomeric CDK1 does not occur. Its activity increases during S and G2 phases and decreases at M phase when it is hyperphosphorylated. A correlated decrease in protein level occurs at M/G1 phase, probably due to its degradation.</text>
</comment>
<comment type="catalytic activity">
    <reaction evidence="1 4">
        <text>L-tyrosyl-[protein] + ATP = O-phospho-L-tyrosyl-[protein] + ADP + H(+)</text>
        <dbReference type="Rhea" id="RHEA:10596"/>
        <dbReference type="Rhea" id="RHEA-COMP:10136"/>
        <dbReference type="Rhea" id="RHEA-COMP:20101"/>
        <dbReference type="ChEBI" id="CHEBI:15378"/>
        <dbReference type="ChEBI" id="CHEBI:30616"/>
        <dbReference type="ChEBI" id="CHEBI:46858"/>
        <dbReference type="ChEBI" id="CHEBI:61978"/>
        <dbReference type="ChEBI" id="CHEBI:456216"/>
        <dbReference type="EC" id="2.7.10.2"/>
    </reaction>
    <physiologicalReaction direction="left-to-right" evidence="1">
        <dbReference type="Rhea" id="RHEA:10597"/>
    </physiologicalReaction>
</comment>
<comment type="cofactor">
    <cofactor evidence="1">
        <name>Mg(2+)</name>
        <dbReference type="ChEBI" id="CHEBI:18420"/>
    </cofactor>
    <text evidence="1">Binds 2 magnesium ions per subunit.</text>
</comment>
<comment type="activity regulation">
    <text evidence="1">Synthesis is increased during S and G2 phases, presumably by an increase in transcription; activity is decreased by phosphorylation during M phase. Protein levels fall in M phase as a result of decreased synthesis combined with degradation. Activity seems to be negatively regulated by phosphorylation upon entry into mitosis, although N-terminal phosphorylation might also regulate the protein stability via protection from proteolysis or might regulate the subcellular location (By similarity).</text>
</comment>
<comment type="subunit">
    <text evidence="1">Binds to 14-3-3 protein zeta.</text>
</comment>
<comment type="subcellular location">
    <subcellularLocation>
        <location evidence="1">Nucleus</location>
    </subcellularLocation>
</comment>
<comment type="PTM">
    <text evidence="1">Phosphorylated during M and G1 phases. Also autophosphorylated. Phosphorylation at Ser-642 by BRSK1 and BRSK2 in post-mitotic neurons, leads to down-regulate WEE1 activity in polarized neurons. Phosphorylated at Ser-52 and Ser-123 by PLK1 and CDK1, respectively, generating an signal for degradation that can be recognized by the SCF(BTRC) complex, leading to its ubiquitination and degradation at the onset of G2/M phase (By similarity).</text>
</comment>
<comment type="PTM">
    <text evidence="1">Dephosphorylated at Thr-239 by CTDP1 (By similarity). Dephosphorylated at Ser-52 and Ser-123 by the serine/threonine-protein phosphatase 2A preventing its ubiquitin-mediated degradation (By similarity).</text>
</comment>
<comment type="PTM">
    <text evidence="1">Ubiquitinated and degraded at the onset of G2/M phase.</text>
</comment>
<comment type="similarity">
    <text evidence="3">Belongs to the protein kinase superfamily. Ser/Thr protein kinase family. WEE1 subfamily.</text>
</comment>
<gene>
    <name type="primary">Wee1</name>
</gene>
<dbReference type="EC" id="2.7.10.2" evidence="1"/>
<dbReference type="EMBL" id="D31838">
    <property type="protein sequence ID" value="BAA06624.1"/>
    <property type="molecule type" value="mRNA"/>
</dbReference>
<dbReference type="EMBL" id="BC090346">
    <property type="protein sequence ID" value="AAH90346.1"/>
    <property type="molecule type" value="mRNA"/>
</dbReference>
<dbReference type="RefSeq" id="NP_001012760.1">
    <property type="nucleotide sequence ID" value="NM_001012742.1"/>
</dbReference>
<dbReference type="RefSeq" id="XP_063119123.1">
    <property type="nucleotide sequence ID" value="XM_063263053.1"/>
</dbReference>
<dbReference type="SMR" id="Q63802"/>
<dbReference type="FunCoup" id="Q63802">
    <property type="interactions" value="4099"/>
</dbReference>
<dbReference type="STRING" id="10116.ENSRNOP00000013362"/>
<dbReference type="iPTMnet" id="Q63802"/>
<dbReference type="PhosphoSitePlus" id="Q63802"/>
<dbReference type="jPOST" id="Q63802"/>
<dbReference type="PaxDb" id="10116-ENSRNOP00000013362"/>
<dbReference type="Ensembl" id="ENSRNOT00000013362.6">
    <property type="protein sequence ID" value="ENSRNOP00000013362.3"/>
    <property type="gene ID" value="ENSRNOG00000010017.7"/>
</dbReference>
<dbReference type="GeneID" id="308937"/>
<dbReference type="KEGG" id="rno:308937"/>
<dbReference type="UCSC" id="RGD:1307895">
    <property type="organism name" value="rat"/>
</dbReference>
<dbReference type="AGR" id="RGD:1307895"/>
<dbReference type="CTD" id="7465"/>
<dbReference type="RGD" id="1307895">
    <property type="gene designation" value="Wee1"/>
</dbReference>
<dbReference type="eggNOG" id="KOG0601">
    <property type="taxonomic scope" value="Eukaryota"/>
</dbReference>
<dbReference type="GeneTree" id="ENSGT00940000157939"/>
<dbReference type="HOGENOM" id="CLU_000288_25_1_1"/>
<dbReference type="InParanoid" id="Q63802"/>
<dbReference type="OMA" id="TIFNHPV"/>
<dbReference type="OrthoDB" id="5337378at2759"/>
<dbReference type="PhylomeDB" id="Q63802"/>
<dbReference type="TreeFam" id="TF101088"/>
<dbReference type="BRENDA" id="2.7.11.1">
    <property type="organism ID" value="5301"/>
</dbReference>
<dbReference type="Reactome" id="R-RNO-156711">
    <property type="pathway name" value="Polo-like kinase mediated events"/>
</dbReference>
<dbReference type="Reactome" id="R-RNO-69202">
    <property type="pathway name" value="Cyclin E associated events during G1/S transition"/>
</dbReference>
<dbReference type="Reactome" id="R-RNO-69273">
    <property type="pathway name" value="Cyclin A/B1/B2 associated events during G2/M transition"/>
</dbReference>
<dbReference type="Reactome" id="R-RNO-69478">
    <property type="pathway name" value="G2/M DNA replication checkpoint"/>
</dbReference>
<dbReference type="Reactome" id="R-RNO-69656">
    <property type="pathway name" value="Cyclin A:Cdk2-associated events at S phase entry"/>
</dbReference>
<dbReference type="Reactome" id="R-RNO-75035">
    <property type="pathway name" value="Chk1/Chk2(Cds1) mediated inactivation of Cyclin B:Cdk1 complex"/>
</dbReference>
<dbReference type="PRO" id="PR:Q63802"/>
<dbReference type="Proteomes" id="UP000002494">
    <property type="component" value="Chromosome 1"/>
</dbReference>
<dbReference type="Bgee" id="ENSRNOG00000010017">
    <property type="expression patterns" value="Expressed in testis and 18 other cell types or tissues"/>
</dbReference>
<dbReference type="GO" id="GO:0005737">
    <property type="term" value="C:cytoplasm"/>
    <property type="evidence" value="ECO:0000266"/>
    <property type="project" value="RGD"/>
</dbReference>
<dbReference type="GO" id="GO:0005730">
    <property type="term" value="C:nucleolus"/>
    <property type="evidence" value="ECO:0007669"/>
    <property type="project" value="Ensembl"/>
</dbReference>
<dbReference type="GO" id="GO:0005634">
    <property type="term" value="C:nucleus"/>
    <property type="evidence" value="ECO:0000250"/>
    <property type="project" value="UniProtKB"/>
</dbReference>
<dbReference type="GO" id="GO:0005524">
    <property type="term" value="F:ATP binding"/>
    <property type="evidence" value="ECO:0007669"/>
    <property type="project" value="UniProtKB-KW"/>
</dbReference>
<dbReference type="GO" id="GO:0000287">
    <property type="term" value="F:magnesium ion binding"/>
    <property type="evidence" value="ECO:0007669"/>
    <property type="project" value="InterPro"/>
</dbReference>
<dbReference type="GO" id="GO:0004715">
    <property type="term" value="F:non-membrane spanning protein tyrosine kinase activity"/>
    <property type="evidence" value="ECO:0007669"/>
    <property type="project" value="UniProtKB-EC"/>
</dbReference>
<dbReference type="GO" id="GO:0004672">
    <property type="term" value="F:protein kinase activity"/>
    <property type="evidence" value="ECO:0000266"/>
    <property type="project" value="RGD"/>
</dbReference>
<dbReference type="GO" id="GO:0004713">
    <property type="term" value="F:protein tyrosine kinase activity"/>
    <property type="evidence" value="ECO:0000250"/>
    <property type="project" value="UniProtKB"/>
</dbReference>
<dbReference type="GO" id="GO:0051301">
    <property type="term" value="P:cell division"/>
    <property type="evidence" value="ECO:0007669"/>
    <property type="project" value="UniProtKB-KW"/>
</dbReference>
<dbReference type="GO" id="GO:0030010">
    <property type="term" value="P:establishment of cell polarity"/>
    <property type="evidence" value="ECO:0000266"/>
    <property type="project" value="RGD"/>
</dbReference>
<dbReference type="GO" id="GO:0000226">
    <property type="term" value="P:microtubule cytoskeleton organization"/>
    <property type="evidence" value="ECO:0000266"/>
    <property type="project" value="RGD"/>
</dbReference>
<dbReference type="GO" id="GO:0000278">
    <property type="term" value="P:mitotic cell cycle"/>
    <property type="evidence" value="ECO:0007669"/>
    <property type="project" value="InterPro"/>
</dbReference>
<dbReference type="GO" id="GO:0010972">
    <property type="term" value="P:negative regulation of G2/M transition of mitotic cell cycle"/>
    <property type="evidence" value="ECO:0000250"/>
    <property type="project" value="UniProtKB"/>
</dbReference>
<dbReference type="GO" id="GO:0048812">
    <property type="term" value="P:neuron projection morphogenesis"/>
    <property type="evidence" value="ECO:0000266"/>
    <property type="project" value="RGD"/>
</dbReference>
<dbReference type="CDD" id="cd14138">
    <property type="entry name" value="PTKc_Wee1a"/>
    <property type="match status" value="1"/>
</dbReference>
<dbReference type="FunFam" id="3.30.200.20:FF:000115">
    <property type="entry name" value="Wee1-like kinase 2"/>
    <property type="match status" value="1"/>
</dbReference>
<dbReference type="FunFam" id="1.10.510.10:FF:000217">
    <property type="entry name" value="Wee1-like protein kinase"/>
    <property type="match status" value="1"/>
</dbReference>
<dbReference type="Gene3D" id="3.30.200.20">
    <property type="entry name" value="Phosphorylase Kinase, domain 1"/>
    <property type="match status" value="1"/>
</dbReference>
<dbReference type="Gene3D" id="1.10.510.10">
    <property type="entry name" value="Transferase(Phosphotransferase) domain 1"/>
    <property type="match status" value="1"/>
</dbReference>
<dbReference type="InterPro" id="IPR050339">
    <property type="entry name" value="CC_SR_Kinase"/>
</dbReference>
<dbReference type="InterPro" id="IPR011009">
    <property type="entry name" value="Kinase-like_dom_sf"/>
</dbReference>
<dbReference type="InterPro" id="IPR000719">
    <property type="entry name" value="Prot_kinase_dom"/>
</dbReference>
<dbReference type="InterPro" id="IPR017441">
    <property type="entry name" value="Protein_kinase_ATP_BS"/>
</dbReference>
<dbReference type="InterPro" id="IPR008271">
    <property type="entry name" value="Ser/Thr_kinase_AS"/>
</dbReference>
<dbReference type="InterPro" id="IPR017164">
    <property type="entry name" value="Wee1-like_protein_kinase"/>
</dbReference>
<dbReference type="PANTHER" id="PTHR11042">
    <property type="entry name" value="EUKARYOTIC TRANSLATION INITIATION FACTOR 2-ALPHA KINASE EIF2-ALPHA KINASE -RELATED"/>
    <property type="match status" value="1"/>
</dbReference>
<dbReference type="PANTHER" id="PTHR11042:SF72">
    <property type="entry name" value="WEE1-LIKE PROTEIN KINASE"/>
    <property type="match status" value="1"/>
</dbReference>
<dbReference type="Pfam" id="PF00069">
    <property type="entry name" value="Pkinase"/>
    <property type="match status" value="1"/>
</dbReference>
<dbReference type="PIRSF" id="PIRSF037281">
    <property type="entry name" value="Wee1-like_protein_kinase"/>
    <property type="match status" value="1"/>
</dbReference>
<dbReference type="SMART" id="SM00220">
    <property type="entry name" value="S_TKc"/>
    <property type="match status" value="1"/>
</dbReference>
<dbReference type="SUPFAM" id="SSF56112">
    <property type="entry name" value="Protein kinase-like (PK-like)"/>
    <property type="match status" value="1"/>
</dbReference>
<dbReference type="PROSITE" id="PS00107">
    <property type="entry name" value="PROTEIN_KINASE_ATP"/>
    <property type="match status" value="1"/>
</dbReference>
<dbReference type="PROSITE" id="PS50011">
    <property type="entry name" value="PROTEIN_KINASE_DOM"/>
    <property type="match status" value="1"/>
</dbReference>
<dbReference type="PROSITE" id="PS00108">
    <property type="entry name" value="PROTEIN_KINASE_ST"/>
    <property type="match status" value="1"/>
</dbReference>
<protein>
    <recommendedName>
        <fullName>Wee1-like protein kinase</fullName>
        <ecNumber evidence="1">2.7.10.2</ecNumber>
    </recommendedName>
    <alternativeName>
        <fullName>Wee1A kinase</fullName>
    </alternativeName>
</protein>
<sequence length="646" mass="71496">MSFLSRQQPPPTRRAAAACSLRQKLIFSPGSDCEEEEEEEEEGSGHSTGEDSAFQEPDSPLPSARSPAEAEAERRRRSPGAEPSSPGELEEDLLLRGGGGGAQAAGGGAEGDSWEEEGFGSSSPVKSPTTAYFLGSSFSPVRCGGPGDASPRGCGVPRAMDDPCSPQPDYPSTPPHKTFRKLRLFDTPHTPKSLLSKARVIDSSSVKLRGSSLFMDTEKSGKREFDTRQTPQVNINPFTPDPVMLHSSGQCRGRKRAYFNDSSEDMEASDYEFEDETRPAKRITITESNMKSRYTTEFHELEKIGSGEFGSVFKCVKRLDGCIYAIKRSKKPLAGSVDEQNALREVYAHAVLGQHPHVVRYFSAWAEDDHMLIQNEYCNGGSLADAVSENYRVMSYFTEAELKDLLLQVGRGLRYIHSMSLVHMDIKPSNIFISRTSIPNAVSEEGDEDDWISNKVMFKIGDLGHVTRISSPQVEEGDSRFLANEVLQENYSHLPKADIFALALTVVCAAGAEPLPRNGDQWHEIRQGRLPRIPQVLSQELTELLKVMIHPDPERRPSAMVLVKHSVLLSASRKSAEQLRIELNAEKFKNSLLQKELKKAQMAAKVAAEERALLTDRMATRSTTQSNRTSRLIGKKMNRSVSLTIY</sequence>
<accession>Q63802</accession>
<accession>Q5EAN3</accession>